<name>PANB2_PSEAE</name>
<accession>Q9HV70</accession>
<evidence type="ECO:0000255" key="1">
    <source>
        <dbReference type="HAMAP-Rule" id="MF_00156"/>
    </source>
</evidence>
<keyword id="KW-0963">Cytoplasm</keyword>
<keyword id="KW-0460">Magnesium</keyword>
<keyword id="KW-0479">Metal-binding</keyword>
<keyword id="KW-0566">Pantothenate biosynthesis</keyword>
<keyword id="KW-1185">Reference proteome</keyword>
<keyword id="KW-0808">Transferase</keyword>
<organism>
    <name type="scientific">Pseudomonas aeruginosa (strain ATCC 15692 / DSM 22644 / CIP 104116 / JCM 14847 / LMG 12228 / 1C / PRS 101 / PAO1)</name>
    <dbReference type="NCBI Taxonomy" id="208964"/>
    <lineage>
        <taxon>Bacteria</taxon>
        <taxon>Pseudomonadati</taxon>
        <taxon>Pseudomonadota</taxon>
        <taxon>Gammaproteobacteria</taxon>
        <taxon>Pseudomonadales</taxon>
        <taxon>Pseudomonadaceae</taxon>
        <taxon>Pseudomonas</taxon>
    </lineage>
</organism>
<comment type="function">
    <text evidence="1">Catalyzes the reversible reaction in which hydroxymethyl group from 5,10-methylenetetrahydrofolate is transferred onto alpha-ketoisovalerate to form ketopantoate.</text>
</comment>
<comment type="catalytic activity">
    <reaction evidence="1">
        <text>3-methyl-2-oxobutanoate + (6R)-5,10-methylene-5,6,7,8-tetrahydrofolate + H2O = 2-dehydropantoate + (6S)-5,6,7,8-tetrahydrofolate</text>
        <dbReference type="Rhea" id="RHEA:11824"/>
        <dbReference type="ChEBI" id="CHEBI:11561"/>
        <dbReference type="ChEBI" id="CHEBI:11851"/>
        <dbReference type="ChEBI" id="CHEBI:15377"/>
        <dbReference type="ChEBI" id="CHEBI:15636"/>
        <dbReference type="ChEBI" id="CHEBI:57453"/>
        <dbReference type="EC" id="2.1.2.11"/>
    </reaction>
</comment>
<comment type="cofactor">
    <cofactor evidence="1">
        <name>Mg(2+)</name>
        <dbReference type="ChEBI" id="CHEBI:18420"/>
    </cofactor>
    <text evidence="1">Binds 1 Mg(2+) ion per subunit.</text>
</comment>
<comment type="pathway">
    <text evidence="1">Cofactor biosynthesis; (R)-pantothenate biosynthesis; (R)-pantoate from 3-methyl-2-oxobutanoate: step 1/2.</text>
</comment>
<comment type="subunit">
    <text evidence="1">Homodecamer; pentamer of dimers.</text>
</comment>
<comment type="subcellular location">
    <subcellularLocation>
        <location evidence="1">Cytoplasm</location>
    </subcellularLocation>
</comment>
<comment type="similarity">
    <text evidence="1">Belongs to the PanB family.</text>
</comment>
<sequence length="266" mass="27874">MPDVTLTTLQGLKQSGEKIAMLTCYDATFAHTASQAGVDVLLVGDSLGMVLQGHDSTLPVSNEEMAYHTACVKRGNKGSLIVTDLAFESSHSVAQTLADAVRLMQAGAHMVKLEGGVWLAEPIARLAQMGVPVCAHLGLTPQAVNLFGGFKVQGRQETQARQLRADAIALEQAGAAMLLLECVPSVLAEEITQAVKIPVIGIGAGAATDGQVLVMHDMLGLSLTGRSPKFVKDFMQGQESIPAAIAAYVRAVKDVSFPAAEHGFNA</sequence>
<feature type="chain" id="PRO_0000184875" description="3-methyl-2-oxobutanoate hydroxymethyltransferase 2">
    <location>
        <begin position="1"/>
        <end position="266"/>
    </location>
</feature>
<feature type="active site" description="Proton acceptor" evidence="1">
    <location>
        <position position="181"/>
    </location>
</feature>
<feature type="binding site" evidence="1">
    <location>
        <begin position="45"/>
        <end position="46"/>
    </location>
    <ligand>
        <name>3-methyl-2-oxobutanoate</name>
        <dbReference type="ChEBI" id="CHEBI:11851"/>
    </ligand>
</feature>
<feature type="binding site" evidence="1">
    <location>
        <position position="45"/>
    </location>
    <ligand>
        <name>Mg(2+)</name>
        <dbReference type="ChEBI" id="CHEBI:18420"/>
    </ligand>
</feature>
<feature type="binding site" evidence="1">
    <location>
        <position position="84"/>
    </location>
    <ligand>
        <name>3-methyl-2-oxobutanoate</name>
        <dbReference type="ChEBI" id="CHEBI:11851"/>
    </ligand>
</feature>
<feature type="binding site" evidence="1">
    <location>
        <position position="84"/>
    </location>
    <ligand>
        <name>Mg(2+)</name>
        <dbReference type="ChEBI" id="CHEBI:18420"/>
    </ligand>
</feature>
<feature type="binding site" evidence="1">
    <location>
        <position position="112"/>
    </location>
    <ligand>
        <name>3-methyl-2-oxobutanoate</name>
        <dbReference type="ChEBI" id="CHEBI:11851"/>
    </ligand>
</feature>
<feature type="binding site" evidence="1">
    <location>
        <position position="114"/>
    </location>
    <ligand>
        <name>Mg(2+)</name>
        <dbReference type="ChEBI" id="CHEBI:18420"/>
    </ligand>
</feature>
<dbReference type="EC" id="2.1.2.11" evidence="1"/>
<dbReference type="EMBL" id="AE004091">
    <property type="protein sequence ID" value="AAG08115.1"/>
    <property type="molecule type" value="Genomic_DNA"/>
</dbReference>
<dbReference type="PIR" id="F83055">
    <property type="entry name" value="F83055"/>
</dbReference>
<dbReference type="SMR" id="Q9HV70"/>
<dbReference type="FunCoup" id="Q9HV70">
    <property type="interactions" value="579"/>
</dbReference>
<dbReference type="STRING" id="208964.PA4729"/>
<dbReference type="PaxDb" id="208964-PA4729"/>
<dbReference type="DNASU" id="881621"/>
<dbReference type="KEGG" id="pae:PA4729"/>
<dbReference type="PATRIC" id="fig|208964.12.peg.4954"/>
<dbReference type="PseudoCAP" id="PA4729"/>
<dbReference type="HOGENOM" id="CLU_036645_1_0_6"/>
<dbReference type="InParanoid" id="Q9HV70"/>
<dbReference type="OrthoDB" id="9781789at2"/>
<dbReference type="PhylomeDB" id="Q9HV70"/>
<dbReference type="BioCyc" id="PAER208964:G1FZ6-4839-MONOMER"/>
<dbReference type="UniPathway" id="UPA00028">
    <property type="reaction ID" value="UER00003"/>
</dbReference>
<dbReference type="Proteomes" id="UP000002438">
    <property type="component" value="Chromosome"/>
</dbReference>
<dbReference type="GO" id="GO:0005737">
    <property type="term" value="C:cytoplasm"/>
    <property type="evidence" value="ECO:0000318"/>
    <property type="project" value="GO_Central"/>
</dbReference>
<dbReference type="GO" id="GO:0003864">
    <property type="term" value="F:3-methyl-2-oxobutanoate hydroxymethyltransferase activity"/>
    <property type="evidence" value="ECO:0000318"/>
    <property type="project" value="GO_Central"/>
</dbReference>
<dbReference type="GO" id="GO:0000287">
    <property type="term" value="F:magnesium ion binding"/>
    <property type="evidence" value="ECO:0000318"/>
    <property type="project" value="GO_Central"/>
</dbReference>
<dbReference type="GO" id="GO:0015940">
    <property type="term" value="P:pantothenate biosynthetic process"/>
    <property type="evidence" value="ECO:0000318"/>
    <property type="project" value="GO_Central"/>
</dbReference>
<dbReference type="CDD" id="cd06557">
    <property type="entry name" value="KPHMT-like"/>
    <property type="match status" value="1"/>
</dbReference>
<dbReference type="FunFam" id="3.20.20.60:FF:000003">
    <property type="entry name" value="3-methyl-2-oxobutanoate hydroxymethyltransferase"/>
    <property type="match status" value="1"/>
</dbReference>
<dbReference type="Gene3D" id="3.20.20.60">
    <property type="entry name" value="Phosphoenolpyruvate-binding domains"/>
    <property type="match status" value="1"/>
</dbReference>
<dbReference type="HAMAP" id="MF_00156">
    <property type="entry name" value="PanB"/>
    <property type="match status" value="1"/>
</dbReference>
<dbReference type="InterPro" id="IPR003700">
    <property type="entry name" value="Pantoate_hydroxy_MeTrfase"/>
</dbReference>
<dbReference type="InterPro" id="IPR015813">
    <property type="entry name" value="Pyrv/PenolPyrv_kinase-like_dom"/>
</dbReference>
<dbReference type="InterPro" id="IPR040442">
    <property type="entry name" value="Pyrv_kinase-like_dom_sf"/>
</dbReference>
<dbReference type="NCBIfam" id="TIGR00222">
    <property type="entry name" value="panB"/>
    <property type="match status" value="1"/>
</dbReference>
<dbReference type="NCBIfam" id="NF001452">
    <property type="entry name" value="PRK00311.1"/>
    <property type="match status" value="1"/>
</dbReference>
<dbReference type="PANTHER" id="PTHR20881">
    <property type="entry name" value="3-METHYL-2-OXOBUTANOATE HYDROXYMETHYLTRANSFERASE"/>
    <property type="match status" value="1"/>
</dbReference>
<dbReference type="PANTHER" id="PTHR20881:SF0">
    <property type="entry name" value="3-METHYL-2-OXOBUTANOATE HYDROXYMETHYLTRANSFERASE"/>
    <property type="match status" value="1"/>
</dbReference>
<dbReference type="Pfam" id="PF02548">
    <property type="entry name" value="Pantoate_transf"/>
    <property type="match status" value="1"/>
</dbReference>
<dbReference type="PIRSF" id="PIRSF000388">
    <property type="entry name" value="Pantoate_hydroxy_MeTrfase"/>
    <property type="match status" value="1"/>
</dbReference>
<dbReference type="SUPFAM" id="SSF51621">
    <property type="entry name" value="Phosphoenolpyruvate/pyruvate domain"/>
    <property type="match status" value="1"/>
</dbReference>
<reference key="1">
    <citation type="journal article" date="2000" name="Nature">
        <title>Complete genome sequence of Pseudomonas aeruginosa PAO1, an opportunistic pathogen.</title>
        <authorList>
            <person name="Stover C.K."/>
            <person name="Pham X.-Q.T."/>
            <person name="Erwin A.L."/>
            <person name="Mizoguchi S.D."/>
            <person name="Warrener P."/>
            <person name="Hickey M.J."/>
            <person name="Brinkman F.S.L."/>
            <person name="Hufnagle W.O."/>
            <person name="Kowalik D.J."/>
            <person name="Lagrou M."/>
            <person name="Garber R.L."/>
            <person name="Goltry L."/>
            <person name="Tolentino E."/>
            <person name="Westbrock-Wadman S."/>
            <person name="Yuan Y."/>
            <person name="Brody L.L."/>
            <person name="Coulter S.N."/>
            <person name="Folger K.R."/>
            <person name="Kas A."/>
            <person name="Larbig K."/>
            <person name="Lim R.M."/>
            <person name="Smith K.A."/>
            <person name="Spencer D.H."/>
            <person name="Wong G.K.-S."/>
            <person name="Wu Z."/>
            <person name="Paulsen I.T."/>
            <person name="Reizer J."/>
            <person name="Saier M.H. Jr."/>
            <person name="Hancock R.E.W."/>
            <person name="Lory S."/>
            <person name="Olson M.V."/>
        </authorList>
    </citation>
    <scope>NUCLEOTIDE SEQUENCE [LARGE SCALE GENOMIC DNA]</scope>
    <source>
        <strain>ATCC 15692 / DSM 22644 / CIP 104116 / JCM 14847 / LMG 12228 / 1C / PRS 101 / PAO1</strain>
    </source>
</reference>
<protein>
    <recommendedName>
        <fullName evidence="1">3-methyl-2-oxobutanoate hydroxymethyltransferase 2</fullName>
        <ecNumber evidence="1">2.1.2.11</ecNumber>
    </recommendedName>
    <alternativeName>
        <fullName evidence="1">Ketopantoate hydroxymethyltransferase 2</fullName>
        <shortName evidence="1">KPHMT 2</shortName>
    </alternativeName>
</protein>
<proteinExistence type="inferred from homology"/>
<gene>
    <name evidence="1" type="primary">panB2</name>
    <name type="ordered locus">PA4729</name>
</gene>